<feature type="chain" id="PRO_1000090121" description="Glutamate--tRNA ligase">
    <location>
        <begin position="1"/>
        <end position="467"/>
    </location>
</feature>
<feature type="short sequence motif" description="'HIGH' region" evidence="1">
    <location>
        <begin position="9"/>
        <end position="19"/>
    </location>
</feature>
<feature type="short sequence motif" description="'KMSKS' region" evidence="1">
    <location>
        <begin position="237"/>
        <end position="241"/>
    </location>
</feature>
<feature type="binding site" evidence="1">
    <location>
        <position position="240"/>
    </location>
    <ligand>
        <name>ATP</name>
        <dbReference type="ChEBI" id="CHEBI:30616"/>
    </ligand>
</feature>
<reference key="1">
    <citation type="journal article" date="2008" name="J. Biotechnol.">
        <title>The genome of Xanthomonas campestris pv. campestris B100 and its use for the reconstruction of metabolic pathways involved in xanthan biosynthesis.</title>
        <authorList>
            <person name="Vorhoelter F.-J."/>
            <person name="Schneiker S."/>
            <person name="Goesmann A."/>
            <person name="Krause L."/>
            <person name="Bekel T."/>
            <person name="Kaiser O."/>
            <person name="Linke B."/>
            <person name="Patschkowski T."/>
            <person name="Rueckert C."/>
            <person name="Schmid J."/>
            <person name="Sidhu V.K."/>
            <person name="Sieber V."/>
            <person name="Tauch A."/>
            <person name="Watt S.A."/>
            <person name="Weisshaar B."/>
            <person name="Becker A."/>
            <person name="Niehaus K."/>
            <person name="Puehler A."/>
        </authorList>
    </citation>
    <scope>NUCLEOTIDE SEQUENCE [LARGE SCALE GENOMIC DNA]</scope>
    <source>
        <strain>B100</strain>
    </source>
</reference>
<comment type="function">
    <text evidence="1">Catalyzes the attachment of glutamate to tRNA(Glu) in a two-step reaction: glutamate is first activated by ATP to form Glu-AMP and then transferred to the acceptor end of tRNA(Glu).</text>
</comment>
<comment type="catalytic activity">
    <reaction evidence="1">
        <text>tRNA(Glu) + L-glutamate + ATP = L-glutamyl-tRNA(Glu) + AMP + diphosphate</text>
        <dbReference type="Rhea" id="RHEA:23540"/>
        <dbReference type="Rhea" id="RHEA-COMP:9663"/>
        <dbReference type="Rhea" id="RHEA-COMP:9680"/>
        <dbReference type="ChEBI" id="CHEBI:29985"/>
        <dbReference type="ChEBI" id="CHEBI:30616"/>
        <dbReference type="ChEBI" id="CHEBI:33019"/>
        <dbReference type="ChEBI" id="CHEBI:78442"/>
        <dbReference type="ChEBI" id="CHEBI:78520"/>
        <dbReference type="ChEBI" id="CHEBI:456215"/>
        <dbReference type="EC" id="6.1.1.17"/>
    </reaction>
</comment>
<comment type="subunit">
    <text evidence="1">Monomer.</text>
</comment>
<comment type="subcellular location">
    <subcellularLocation>
        <location evidence="1">Cytoplasm</location>
    </subcellularLocation>
</comment>
<comment type="similarity">
    <text evidence="1">Belongs to the class-I aminoacyl-tRNA synthetase family. Glutamate--tRNA ligase type 1 subfamily.</text>
</comment>
<protein>
    <recommendedName>
        <fullName evidence="1">Glutamate--tRNA ligase</fullName>
        <ecNumber evidence="1">6.1.1.17</ecNumber>
    </recommendedName>
    <alternativeName>
        <fullName evidence="1">Glutamyl-tRNA synthetase</fullName>
        <shortName evidence="1">GluRS</shortName>
    </alternativeName>
</protein>
<organism>
    <name type="scientific">Xanthomonas campestris pv. campestris (strain B100)</name>
    <dbReference type="NCBI Taxonomy" id="509169"/>
    <lineage>
        <taxon>Bacteria</taxon>
        <taxon>Pseudomonadati</taxon>
        <taxon>Pseudomonadota</taxon>
        <taxon>Gammaproteobacteria</taxon>
        <taxon>Lysobacterales</taxon>
        <taxon>Lysobacteraceae</taxon>
        <taxon>Xanthomonas</taxon>
    </lineage>
</organism>
<accession>B0RQU0</accession>
<evidence type="ECO:0000255" key="1">
    <source>
        <dbReference type="HAMAP-Rule" id="MF_00022"/>
    </source>
</evidence>
<dbReference type="EC" id="6.1.1.17" evidence="1"/>
<dbReference type="EMBL" id="AM920689">
    <property type="protein sequence ID" value="CAP50825.1"/>
    <property type="molecule type" value="Genomic_DNA"/>
</dbReference>
<dbReference type="SMR" id="B0RQU0"/>
<dbReference type="KEGG" id="xca:xcc-b100_1475"/>
<dbReference type="HOGENOM" id="CLU_015768_6_0_6"/>
<dbReference type="Proteomes" id="UP000001188">
    <property type="component" value="Chromosome"/>
</dbReference>
<dbReference type="GO" id="GO:0005829">
    <property type="term" value="C:cytosol"/>
    <property type="evidence" value="ECO:0007669"/>
    <property type="project" value="TreeGrafter"/>
</dbReference>
<dbReference type="GO" id="GO:0005524">
    <property type="term" value="F:ATP binding"/>
    <property type="evidence" value="ECO:0007669"/>
    <property type="project" value="UniProtKB-UniRule"/>
</dbReference>
<dbReference type="GO" id="GO:0004818">
    <property type="term" value="F:glutamate-tRNA ligase activity"/>
    <property type="evidence" value="ECO:0007669"/>
    <property type="project" value="UniProtKB-UniRule"/>
</dbReference>
<dbReference type="GO" id="GO:0000049">
    <property type="term" value="F:tRNA binding"/>
    <property type="evidence" value="ECO:0007669"/>
    <property type="project" value="InterPro"/>
</dbReference>
<dbReference type="GO" id="GO:0008270">
    <property type="term" value="F:zinc ion binding"/>
    <property type="evidence" value="ECO:0007669"/>
    <property type="project" value="InterPro"/>
</dbReference>
<dbReference type="GO" id="GO:0006424">
    <property type="term" value="P:glutamyl-tRNA aminoacylation"/>
    <property type="evidence" value="ECO:0007669"/>
    <property type="project" value="UniProtKB-UniRule"/>
</dbReference>
<dbReference type="CDD" id="cd00808">
    <property type="entry name" value="GluRS_core"/>
    <property type="match status" value="1"/>
</dbReference>
<dbReference type="FunFam" id="3.40.50.620:FF:000007">
    <property type="entry name" value="Glutamate--tRNA ligase"/>
    <property type="match status" value="1"/>
</dbReference>
<dbReference type="Gene3D" id="1.10.10.350">
    <property type="match status" value="1"/>
</dbReference>
<dbReference type="Gene3D" id="3.40.50.620">
    <property type="entry name" value="HUPs"/>
    <property type="match status" value="1"/>
</dbReference>
<dbReference type="HAMAP" id="MF_00022">
    <property type="entry name" value="Glu_tRNA_synth_type1"/>
    <property type="match status" value="1"/>
</dbReference>
<dbReference type="InterPro" id="IPR045462">
    <property type="entry name" value="aa-tRNA-synth_I_cd-bd"/>
</dbReference>
<dbReference type="InterPro" id="IPR020751">
    <property type="entry name" value="aa-tRNA-synth_I_codon-bd_sub2"/>
</dbReference>
<dbReference type="InterPro" id="IPR001412">
    <property type="entry name" value="aa-tRNA-synth_I_CS"/>
</dbReference>
<dbReference type="InterPro" id="IPR008925">
    <property type="entry name" value="aa_tRNA-synth_I_cd-bd_sf"/>
</dbReference>
<dbReference type="InterPro" id="IPR004527">
    <property type="entry name" value="Glu-tRNA-ligase_bac/mito"/>
</dbReference>
<dbReference type="InterPro" id="IPR000924">
    <property type="entry name" value="Glu/Gln-tRNA-synth"/>
</dbReference>
<dbReference type="InterPro" id="IPR020058">
    <property type="entry name" value="Glu/Gln-tRNA-synth_Ib_cat-dom"/>
</dbReference>
<dbReference type="InterPro" id="IPR049940">
    <property type="entry name" value="GluQ/Sye"/>
</dbReference>
<dbReference type="InterPro" id="IPR033910">
    <property type="entry name" value="GluRS_core"/>
</dbReference>
<dbReference type="InterPro" id="IPR014729">
    <property type="entry name" value="Rossmann-like_a/b/a_fold"/>
</dbReference>
<dbReference type="NCBIfam" id="TIGR00464">
    <property type="entry name" value="gltX_bact"/>
    <property type="match status" value="1"/>
</dbReference>
<dbReference type="PANTHER" id="PTHR43311">
    <property type="entry name" value="GLUTAMATE--TRNA LIGASE"/>
    <property type="match status" value="1"/>
</dbReference>
<dbReference type="PANTHER" id="PTHR43311:SF2">
    <property type="entry name" value="GLUTAMATE--TRNA LIGASE, MITOCHONDRIAL-RELATED"/>
    <property type="match status" value="1"/>
</dbReference>
<dbReference type="Pfam" id="PF19269">
    <property type="entry name" value="Anticodon_2"/>
    <property type="match status" value="1"/>
</dbReference>
<dbReference type="Pfam" id="PF00749">
    <property type="entry name" value="tRNA-synt_1c"/>
    <property type="match status" value="1"/>
</dbReference>
<dbReference type="PRINTS" id="PR00987">
    <property type="entry name" value="TRNASYNTHGLU"/>
</dbReference>
<dbReference type="SUPFAM" id="SSF48163">
    <property type="entry name" value="An anticodon-binding domain of class I aminoacyl-tRNA synthetases"/>
    <property type="match status" value="1"/>
</dbReference>
<dbReference type="SUPFAM" id="SSF52374">
    <property type="entry name" value="Nucleotidylyl transferase"/>
    <property type="match status" value="1"/>
</dbReference>
<dbReference type="PROSITE" id="PS00178">
    <property type="entry name" value="AA_TRNA_LIGASE_I"/>
    <property type="match status" value="1"/>
</dbReference>
<keyword id="KW-0030">Aminoacyl-tRNA synthetase</keyword>
<keyword id="KW-0067">ATP-binding</keyword>
<keyword id="KW-0963">Cytoplasm</keyword>
<keyword id="KW-0436">Ligase</keyword>
<keyword id="KW-0547">Nucleotide-binding</keyword>
<keyword id="KW-0648">Protein biosynthesis</keyword>
<proteinExistence type="inferred from homology"/>
<gene>
    <name evidence="1" type="primary">gltX</name>
    <name type="ordered locus">xcc-b100_1475</name>
</gene>
<name>SYE_XANCB</name>
<sequence length="467" mass="51955">MTCRTRFAPSPTGYLHIGGARTALYCWLEARHRGGQFVLRIEDTDRERSTQAAIDAILEAMEWLGLGYDEGPIYQTQRIARYQEVAEQLLAQGKAYYAYETREELDAMREAAMAKQEKPRYNGAAREQQLPYRDDPNRVIRFKNPLAGTVVFDDLIKGRIEIANSELDDMVIFRPDGYPTYNFAVVVDDWDMGITEVIRGDDHINNTPRQINIYEALGAPVPKFAHMPMILDEQGAKLSKRTGAADVMQYKDAGYLPHALINYLARLGWSHGDQELFSQQELLDLFDVKDVNSKAARLDMAKLGWVNQHYLKTDDPASIAPQLEYQLRKLGIDVAAGPAAADVVVALRERVQTLKEMAEKAVVWYQPLETYDEAAVIKHLKLGAEVPLGKAREMLAALNEWSVENVSAALHAAAAALELGMGKVAQPLRVAITGTQVSPDISQTVYLAGREGALKRIDAALIKIGAA</sequence>